<accession>B7KFR0</accession>
<reference key="1">
    <citation type="journal article" date="2011" name="MBio">
        <title>Novel metabolic attributes of the genus Cyanothece, comprising a group of unicellular nitrogen-fixing Cyanobacteria.</title>
        <authorList>
            <person name="Bandyopadhyay A."/>
            <person name="Elvitigala T."/>
            <person name="Welsh E."/>
            <person name="Stockel J."/>
            <person name="Liberton M."/>
            <person name="Min H."/>
            <person name="Sherman L.A."/>
            <person name="Pakrasi H.B."/>
        </authorList>
    </citation>
    <scope>NUCLEOTIDE SEQUENCE [LARGE SCALE GENOMIC DNA]</scope>
    <source>
        <strain>PCC 7424</strain>
    </source>
</reference>
<evidence type="ECO:0000255" key="1">
    <source>
        <dbReference type="HAMAP-Rule" id="MF_01316"/>
    </source>
</evidence>
<dbReference type="EMBL" id="CP001291">
    <property type="protein sequence ID" value="ACK73385.1"/>
    <property type="molecule type" value="Genomic_DNA"/>
</dbReference>
<dbReference type="RefSeq" id="WP_015956965.1">
    <property type="nucleotide sequence ID" value="NC_011729.1"/>
</dbReference>
<dbReference type="SMR" id="B7KFR0"/>
<dbReference type="STRING" id="65393.PCC7424_5032"/>
<dbReference type="KEGG" id="cyc:PCC7424_5032"/>
<dbReference type="eggNOG" id="ENOG5033CII">
    <property type="taxonomic scope" value="Bacteria"/>
</dbReference>
<dbReference type="HOGENOM" id="CLU_212150_0_0_3"/>
<dbReference type="Proteomes" id="UP000002384">
    <property type="component" value="Chromosome"/>
</dbReference>
<dbReference type="GO" id="GO:0009539">
    <property type="term" value="C:photosystem II reaction center"/>
    <property type="evidence" value="ECO:0007669"/>
    <property type="project" value="InterPro"/>
</dbReference>
<dbReference type="GO" id="GO:0031676">
    <property type="term" value="C:plasma membrane-derived thylakoid membrane"/>
    <property type="evidence" value="ECO:0007669"/>
    <property type="project" value="UniProtKB-SubCell"/>
</dbReference>
<dbReference type="GO" id="GO:0015979">
    <property type="term" value="P:photosynthesis"/>
    <property type="evidence" value="ECO:0007669"/>
    <property type="project" value="UniProtKB-UniRule"/>
</dbReference>
<dbReference type="HAMAP" id="MF_01316">
    <property type="entry name" value="PSII_PsbI"/>
    <property type="match status" value="1"/>
</dbReference>
<dbReference type="InterPro" id="IPR003686">
    <property type="entry name" value="PSII_PsbI"/>
</dbReference>
<dbReference type="InterPro" id="IPR037271">
    <property type="entry name" value="PSII_PsbI_sf"/>
</dbReference>
<dbReference type="NCBIfam" id="NF002735">
    <property type="entry name" value="PRK02655.1"/>
    <property type="match status" value="1"/>
</dbReference>
<dbReference type="PANTHER" id="PTHR35772">
    <property type="entry name" value="PHOTOSYSTEM II REACTION CENTER PROTEIN I"/>
    <property type="match status" value="1"/>
</dbReference>
<dbReference type="PANTHER" id="PTHR35772:SF1">
    <property type="entry name" value="PHOTOSYSTEM II REACTION CENTER PROTEIN I"/>
    <property type="match status" value="1"/>
</dbReference>
<dbReference type="Pfam" id="PF02532">
    <property type="entry name" value="PsbI"/>
    <property type="match status" value="1"/>
</dbReference>
<dbReference type="SUPFAM" id="SSF161041">
    <property type="entry name" value="Photosystem II reaction center protein I, PsbI"/>
    <property type="match status" value="1"/>
</dbReference>
<proteinExistence type="inferred from homology"/>
<sequence length="38" mass="4324">MLTLKIAVYIVVAFFIALFVFGFLSSDPTRNPGRKDFE</sequence>
<comment type="function">
    <text evidence="1">One of the components of the core complex of photosystem II (PSII), required for its stability and/or assembly. PSII is a light-driven water:plastoquinone oxidoreductase that uses light energy to abstract electrons from H(2)O, generating O(2) and a proton gradient subsequently used for ATP formation. It consists of a core antenna complex that captures photons, and an electron transfer chain that converts photonic excitation into a charge separation.</text>
</comment>
<comment type="subunit">
    <text evidence="1">PSII is composed of 1 copy each of membrane proteins PsbA, PsbB, PsbC, PsbD, PsbE, PsbF, PsbH, PsbI, PsbJ, PsbK, PsbL, PsbM, PsbT, PsbX, PsbY, PsbZ, Psb30/Ycf12, peripheral proteins PsbO, CyanoQ (PsbQ), PsbU, PsbV and a large number of cofactors. It forms dimeric complexes.</text>
</comment>
<comment type="subcellular location">
    <subcellularLocation>
        <location evidence="1">Cellular thylakoid membrane</location>
        <topology evidence="1">Single-pass membrane protein</topology>
    </subcellularLocation>
</comment>
<comment type="similarity">
    <text evidence="1">Belongs to the PsbI family.</text>
</comment>
<organism>
    <name type="scientific">Gloeothece citriformis (strain PCC 7424)</name>
    <name type="common">Cyanothece sp. (strain PCC 7424)</name>
    <dbReference type="NCBI Taxonomy" id="65393"/>
    <lineage>
        <taxon>Bacteria</taxon>
        <taxon>Bacillati</taxon>
        <taxon>Cyanobacteriota</taxon>
        <taxon>Cyanophyceae</taxon>
        <taxon>Oscillatoriophycideae</taxon>
        <taxon>Chroococcales</taxon>
        <taxon>Aphanothecaceae</taxon>
        <taxon>Gloeothece</taxon>
        <taxon>Gloeothece citriformis</taxon>
    </lineage>
</organism>
<keyword id="KW-0472">Membrane</keyword>
<keyword id="KW-0602">Photosynthesis</keyword>
<keyword id="KW-0604">Photosystem II</keyword>
<keyword id="KW-0674">Reaction center</keyword>
<keyword id="KW-1185">Reference proteome</keyword>
<keyword id="KW-0793">Thylakoid</keyword>
<keyword id="KW-0812">Transmembrane</keyword>
<keyword id="KW-1133">Transmembrane helix</keyword>
<protein>
    <recommendedName>
        <fullName evidence="1">Photosystem II reaction center protein I</fullName>
        <shortName evidence="1">PSII-I</shortName>
    </recommendedName>
    <alternativeName>
        <fullName evidence="1">PSII 4.4 kDa protein</fullName>
    </alternativeName>
</protein>
<gene>
    <name evidence="1" type="primary">psbI</name>
    <name type="ordered locus">PCC7424_5032</name>
</gene>
<feature type="chain" id="PRO_1000141337" description="Photosystem II reaction center protein I">
    <location>
        <begin position="1"/>
        <end position="38"/>
    </location>
</feature>
<feature type="transmembrane region" description="Helical" evidence="1">
    <location>
        <begin position="6"/>
        <end position="26"/>
    </location>
</feature>
<name>PSBI_GLOC7</name>